<protein>
    <recommendedName>
        <fullName evidence="1">Anaerobic nitric oxide reductase transcription regulator NorR</fullName>
    </recommendedName>
</protein>
<comment type="function">
    <text evidence="1">Required for the expression of anaerobic nitric oxide (NO) reductase, acts as a transcriptional activator for at least the norVW operon. Activation also requires sigma-54.</text>
</comment>
<comment type="pathway">
    <text evidence="1">Nitrogen metabolism; nitric oxide reduction.</text>
</comment>
<dbReference type="EMBL" id="CP000946">
    <property type="protein sequence ID" value="ACA76672.1"/>
    <property type="molecule type" value="Genomic_DNA"/>
</dbReference>
<dbReference type="RefSeq" id="WP_000010771.1">
    <property type="nucleotide sequence ID" value="NZ_MTFT01000026.1"/>
</dbReference>
<dbReference type="SMR" id="B1IUX0"/>
<dbReference type="KEGG" id="ecl:EcolC_1003"/>
<dbReference type="HOGENOM" id="CLU_000445_125_0_6"/>
<dbReference type="UniPathway" id="UPA00638"/>
<dbReference type="GO" id="GO:0005524">
    <property type="term" value="F:ATP binding"/>
    <property type="evidence" value="ECO:0007669"/>
    <property type="project" value="UniProtKB-UniRule"/>
</dbReference>
<dbReference type="GO" id="GO:0016887">
    <property type="term" value="F:ATP hydrolysis activity"/>
    <property type="evidence" value="ECO:0007669"/>
    <property type="project" value="InterPro"/>
</dbReference>
<dbReference type="GO" id="GO:0003677">
    <property type="term" value="F:DNA binding"/>
    <property type="evidence" value="ECO:0007669"/>
    <property type="project" value="UniProtKB-KW"/>
</dbReference>
<dbReference type="GO" id="GO:0003700">
    <property type="term" value="F:DNA-binding transcription factor activity"/>
    <property type="evidence" value="ECO:0007669"/>
    <property type="project" value="UniProtKB-UniRule"/>
</dbReference>
<dbReference type="GO" id="GO:0000160">
    <property type="term" value="P:phosphorelay signal transduction system"/>
    <property type="evidence" value="ECO:0007669"/>
    <property type="project" value="UniProtKB-UniRule"/>
</dbReference>
<dbReference type="CDD" id="cd00009">
    <property type="entry name" value="AAA"/>
    <property type="match status" value="1"/>
</dbReference>
<dbReference type="FunFam" id="1.10.10.60:FF:000188">
    <property type="entry name" value="Anaerobic nitric oxide reductase transcription regulator NorR"/>
    <property type="match status" value="1"/>
</dbReference>
<dbReference type="FunFam" id="1.10.8.60:FF:000045">
    <property type="entry name" value="Anaerobic nitric oxide reductase transcription regulator NorR"/>
    <property type="match status" value="1"/>
</dbReference>
<dbReference type="FunFam" id="3.30.450.40:FF:000021">
    <property type="entry name" value="Anaerobic nitric oxide reductase transcription regulator NorR"/>
    <property type="match status" value="1"/>
</dbReference>
<dbReference type="FunFam" id="3.40.50.300:FF:000006">
    <property type="entry name" value="DNA-binding transcriptional regulator NtrC"/>
    <property type="match status" value="1"/>
</dbReference>
<dbReference type="Gene3D" id="1.10.8.60">
    <property type="match status" value="1"/>
</dbReference>
<dbReference type="Gene3D" id="3.30.450.40">
    <property type="match status" value="1"/>
</dbReference>
<dbReference type="Gene3D" id="1.10.10.60">
    <property type="entry name" value="Homeodomain-like"/>
    <property type="match status" value="1"/>
</dbReference>
<dbReference type="Gene3D" id="3.40.50.300">
    <property type="entry name" value="P-loop containing nucleotide triphosphate hydrolases"/>
    <property type="match status" value="1"/>
</dbReference>
<dbReference type="HAMAP" id="MF_01314">
    <property type="entry name" value="NorR"/>
    <property type="match status" value="1"/>
</dbReference>
<dbReference type="InterPro" id="IPR003593">
    <property type="entry name" value="AAA+_ATPase"/>
</dbReference>
<dbReference type="InterPro" id="IPR003018">
    <property type="entry name" value="GAF"/>
</dbReference>
<dbReference type="InterPro" id="IPR029016">
    <property type="entry name" value="GAF-like_dom_sf"/>
</dbReference>
<dbReference type="InterPro" id="IPR009057">
    <property type="entry name" value="Homeodomain-like_sf"/>
</dbReference>
<dbReference type="InterPro" id="IPR023944">
    <property type="entry name" value="NorR"/>
</dbReference>
<dbReference type="InterPro" id="IPR027417">
    <property type="entry name" value="P-loop_NTPase"/>
</dbReference>
<dbReference type="InterPro" id="IPR002078">
    <property type="entry name" value="Sigma_54_int"/>
</dbReference>
<dbReference type="InterPro" id="IPR025662">
    <property type="entry name" value="Sigma_54_int_dom_ATP-bd_1"/>
</dbReference>
<dbReference type="InterPro" id="IPR025943">
    <property type="entry name" value="Sigma_54_int_dom_ATP-bd_2"/>
</dbReference>
<dbReference type="InterPro" id="IPR025944">
    <property type="entry name" value="Sigma_54_int_dom_CS"/>
</dbReference>
<dbReference type="NCBIfam" id="NF003451">
    <property type="entry name" value="PRK05022.1"/>
    <property type="match status" value="1"/>
</dbReference>
<dbReference type="PANTHER" id="PTHR32071:SF35">
    <property type="entry name" value="ANAEROBIC NITRIC OXIDE REDUCTASE TRANSCRIPTION REGULATOR NORR"/>
    <property type="match status" value="1"/>
</dbReference>
<dbReference type="PANTHER" id="PTHR32071">
    <property type="entry name" value="TRANSCRIPTIONAL REGULATORY PROTEIN"/>
    <property type="match status" value="1"/>
</dbReference>
<dbReference type="Pfam" id="PF01590">
    <property type="entry name" value="GAF"/>
    <property type="match status" value="1"/>
</dbReference>
<dbReference type="Pfam" id="PF00158">
    <property type="entry name" value="Sigma54_activat"/>
    <property type="match status" value="1"/>
</dbReference>
<dbReference type="SMART" id="SM00382">
    <property type="entry name" value="AAA"/>
    <property type="match status" value="1"/>
</dbReference>
<dbReference type="SMART" id="SM00065">
    <property type="entry name" value="GAF"/>
    <property type="match status" value="1"/>
</dbReference>
<dbReference type="SUPFAM" id="SSF55781">
    <property type="entry name" value="GAF domain-like"/>
    <property type="match status" value="1"/>
</dbReference>
<dbReference type="SUPFAM" id="SSF46689">
    <property type="entry name" value="Homeodomain-like"/>
    <property type="match status" value="1"/>
</dbReference>
<dbReference type="SUPFAM" id="SSF52540">
    <property type="entry name" value="P-loop containing nucleoside triphosphate hydrolases"/>
    <property type="match status" value="1"/>
</dbReference>
<dbReference type="PROSITE" id="PS00675">
    <property type="entry name" value="SIGMA54_INTERACT_1"/>
    <property type="match status" value="1"/>
</dbReference>
<dbReference type="PROSITE" id="PS00676">
    <property type="entry name" value="SIGMA54_INTERACT_2"/>
    <property type="match status" value="1"/>
</dbReference>
<dbReference type="PROSITE" id="PS00688">
    <property type="entry name" value="SIGMA54_INTERACT_3"/>
    <property type="match status" value="1"/>
</dbReference>
<dbReference type="PROSITE" id="PS50045">
    <property type="entry name" value="SIGMA54_INTERACT_4"/>
    <property type="match status" value="1"/>
</dbReference>
<accession>B1IUX0</accession>
<feature type="chain" id="PRO_1000086223" description="Anaerobic nitric oxide reductase transcription regulator NorR">
    <location>
        <begin position="1"/>
        <end position="504"/>
    </location>
</feature>
<feature type="domain" description="Sigma-54 factor interaction" evidence="1">
    <location>
        <begin position="187"/>
        <end position="416"/>
    </location>
</feature>
<feature type="DNA-binding region" description="H-T-H motif" evidence="1">
    <location>
        <begin position="479"/>
        <end position="498"/>
    </location>
</feature>
<feature type="binding site" evidence="1">
    <location>
        <begin position="215"/>
        <end position="222"/>
    </location>
    <ligand>
        <name>ATP</name>
        <dbReference type="ChEBI" id="CHEBI:30616"/>
    </ligand>
</feature>
<feature type="binding site" evidence="1">
    <location>
        <begin position="278"/>
        <end position="287"/>
    </location>
    <ligand>
        <name>ATP</name>
        <dbReference type="ChEBI" id="CHEBI:30616"/>
    </ligand>
</feature>
<feature type="modified residue" description="4-aspartylphosphate" evidence="1">
    <location>
        <position position="57"/>
    </location>
</feature>
<keyword id="KW-0067">ATP-binding</keyword>
<keyword id="KW-0238">DNA-binding</keyword>
<keyword id="KW-0547">Nucleotide-binding</keyword>
<keyword id="KW-0597">Phosphoprotein</keyword>
<keyword id="KW-0804">Transcription</keyword>
<keyword id="KW-0805">Transcription regulation</keyword>
<evidence type="ECO:0000255" key="1">
    <source>
        <dbReference type="HAMAP-Rule" id="MF_01314"/>
    </source>
</evidence>
<name>NORR_ECOLC</name>
<gene>
    <name evidence="1" type="primary">norR</name>
    <name type="ordered locus">EcolC_1003</name>
</gene>
<reference key="1">
    <citation type="submission" date="2008-02" db="EMBL/GenBank/DDBJ databases">
        <title>Complete sequence of Escherichia coli C str. ATCC 8739.</title>
        <authorList>
            <person name="Copeland A."/>
            <person name="Lucas S."/>
            <person name="Lapidus A."/>
            <person name="Glavina del Rio T."/>
            <person name="Dalin E."/>
            <person name="Tice H."/>
            <person name="Bruce D."/>
            <person name="Goodwin L."/>
            <person name="Pitluck S."/>
            <person name="Kiss H."/>
            <person name="Brettin T."/>
            <person name="Detter J.C."/>
            <person name="Han C."/>
            <person name="Kuske C.R."/>
            <person name="Schmutz J."/>
            <person name="Larimer F."/>
            <person name="Land M."/>
            <person name="Hauser L."/>
            <person name="Kyrpides N."/>
            <person name="Mikhailova N."/>
            <person name="Ingram L."/>
            <person name="Richardson P."/>
        </authorList>
    </citation>
    <scope>NUCLEOTIDE SEQUENCE [LARGE SCALE GENOMIC DNA]</scope>
    <source>
        <strain>ATCC 8739 / DSM 1576 / NBRC 3972 / NCIMB 8545 / WDCM 00012 / Crooks</strain>
    </source>
</reference>
<sequence length="504" mass="55305">MSFSVDVLANIAIELQRGIGHQDRFQRLITTLRQVLECDASALLRYDSRQFIPLAIDGLAKDVLGRRFALEGHPRLEAIARAGDVVRFPADSELPDPYDGLIPGQESLKVHACVGLPLFAGQNLIGALTLDGMQPDQFDVFSDEELRLIAALAAGALSNALLIEQLESQNMMPGDATPFEAVKQTQMIGLSPGMTQLKKEIEIVAASDLNVLISGETGTGKELVAKAIHEASPRAVNPLVYLNCAALPESVAESELFGHVKGAFTGAISNRSGKFEMADNGTLFLDEIGELSLALQAKLLRVLQYGDIQRVGDDRSLRVDVRVLAATNRDLREEVLAGRFRADLFHRLSVFPLSVPPLRERGDDVILLAGYFCEQCRLRLGLSRVVLSAGARNLLQHYRFPGNVRELEHAIHRAVVLARATRNGDEVILEAQHFAFPEVTLPPPEAAAVPVVKQNLREATEAFQRETIRQALAQNHHNWAACARMLETDVANLHRLAKRLGMKD</sequence>
<organism>
    <name type="scientific">Escherichia coli (strain ATCC 8739 / DSM 1576 / NBRC 3972 / NCIMB 8545 / WDCM 00012 / Crooks)</name>
    <dbReference type="NCBI Taxonomy" id="481805"/>
    <lineage>
        <taxon>Bacteria</taxon>
        <taxon>Pseudomonadati</taxon>
        <taxon>Pseudomonadota</taxon>
        <taxon>Gammaproteobacteria</taxon>
        <taxon>Enterobacterales</taxon>
        <taxon>Enterobacteriaceae</taxon>
        <taxon>Escherichia</taxon>
    </lineage>
</organism>
<proteinExistence type="inferred from homology"/>